<accession>Q54MV4</accession>
<name>Y8563_DICDI</name>
<protein>
    <recommendedName>
        <fullName>Putative phosphatidylglycerol/phosphatidylinositol transfer protein DDB_G0285639</fullName>
    </recommendedName>
</protein>
<gene>
    <name type="ORF">DDB_G0285639</name>
</gene>
<evidence type="ECO:0000250" key="1"/>
<evidence type="ECO:0000255" key="2"/>
<evidence type="ECO:0000305" key="3"/>
<comment type="function">
    <text evidence="1">Catalyzes the intermembrane transfer of phosphatidylglycerol and phosphatidylinositol.</text>
</comment>
<comment type="subunit">
    <text evidence="1">Monomer.</text>
</comment>
<comment type="similarity">
    <text evidence="3">Belongs to the NPC2 family.</text>
</comment>
<reference key="1">
    <citation type="journal article" date="2005" name="Nature">
        <title>The genome of the social amoeba Dictyostelium discoideum.</title>
        <authorList>
            <person name="Eichinger L."/>
            <person name="Pachebat J.A."/>
            <person name="Gloeckner G."/>
            <person name="Rajandream M.A."/>
            <person name="Sucgang R."/>
            <person name="Berriman M."/>
            <person name="Song J."/>
            <person name="Olsen R."/>
            <person name="Szafranski K."/>
            <person name="Xu Q."/>
            <person name="Tunggal B."/>
            <person name="Kummerfeld S."/>
            <person name="Madera M."/>
            <person name="Konfortov B.A."/>
            <person name="Rivero F."/>
            <person name="Bankier A.T."/>
            <person name="Lehmann R."/>
            <person name="Hamlin N."/>
            <person name="Davies R."/>
            <person name="Gaudet P."/>
            <person name="Fey P."/>
            <person name="Pilcher K."/>
            <person name="Chen G."/>
            <person name="Saunders D."/>
            <person name="Sodergren E.J."/>
            <person name="Davis P."/>
            <person name="Kerhornou A."/>
            <person name="Nie X."/>
            <person name="Hall N."/>
            <person name="Anjard C."/>
            <person name="Hemphill L."/>
            <person name="Bason N."/>
            <person name="Farbrother P."/>
            <person name="Desany B."/>
            <person name="Just E."/>
            <person name="Morio T."/>
            <person name="Rost R."/>
            <person name="Churcher C.M."/>
            <person name="Cooper J."/>
            <person name="Haydock S."/>
            <person name="van Driessche N."/>
            <person name="Cronin A."/>
            <person name="Goodhead I."/>
            <person name="Muzny D.M."/>
            <person name="Mourier T."/>
            <person name="Pain A."/>
            <person name="Lu M."/>
            <person name="Harper D."/>
            <person name="Lindsay R."/>
            <person name="Hauser H."/>
            <person name="James K.D."/>
            <person name="Quiles M."/>
            <person name="Madan Babu M."/>
            <person name="Saito T."/>
            <person name="Buchrieser C."/>
            <person name="Wardroper A."/>
            <person name="Felder M."/>
            <person name="Thangavelu M."/>
            <person name="Johnson D."/>
            <person name="Knights A."/>
            <person name="Loulseged H."/>
            <person name="Mungall K.L."/>
            <person name="Oliver K."/>
            <person name="Price C."/>
            <person name="Quail M.A."/>
            <person name="Urushihara H."/>
            <person name="Hernandez J."/>
            <person name="Rabbinowitsch E."/>
            <person name="Steffen D."/>
            <person name="Sanders M."/>
            <person name="Ma J."/>
            <person name="Kohara Y."/>
            <person name="Sharp S."/>
            <person name="Simmonds M.N."/>
            <person name="Spiegler S."/>
            <person name="Tivey A."/>
            <person name="Sugano S."/>
            <person name="White B."/>
            <person name="Walker D."/>
            <person name="Woodward J.R."/>
            <person name="Winckler T."/>
            <person name="Tanaka Y."/>
            <person name="Shaulsky G."/>
            <person name="Schleicher M."/>
            <person name="Weinstock G.M."/>
            <person name="Rosenthal A."/>
            <person name="Cox E.C."/>
            <person name="Chisholm R.L."/>
            <person name="Gibbs R.A."/>
            <person name="Loomis W.F."/>
            <person name="Platzer M."/>
            <person name="Kay R.R."/>
            <person name="Williams J.G."/>
            <person name="Dear P.H."/>
            <person name="Noegel A.A."/>
            <person name="Barrell B.G."/>
            <person name="Kuspa A."/>
        </authorList>
    </citation>
    <scope>NUCLEOTIDE SEQUENCE [LARGE SCALE GENOMIC DNA]</scope>
    <source>
        <strain>AX4</strain>
    </source>
</reference>
<keyword id="KW-0325">Glycoprotein</keyword>
<keyword id="KW-0445">Lipid transport</keyword>
<keyword id="KW-1185">Reference proteome</keyword>
<keyword id="KW-0732">Signal</keyword>
<keyword id="KW-0813">Transport</keyword>
<sequence>MIIKILLLIISISLFLNISIGIDENQIWKSCGTPQDIFHINSIVVKPTPPVKGKLVKVNVNGTFIKDVVAGEAKIIAKYNNIMTLYNETNDLCSPTAQAIIGNCPFKKGPTYLHSANFTIPASAPNGYYSGNILLTDNFNNTITCINVAFNLQ</sequence>
<proteinExistence type="inferred from homology"/>
<organism>
    <name type="scientific">Dictyostelium discoideum</name>
    <name type="common">Social amoeba</name>
    <dbReference type="NCBI Taxonomy" id="44689"/>
    <lineage>
        <taxon>Eukaryota</taxon>
        <taxon>Amoebozoa</taxon>
        <taxon>Evosea</taxon>
        <taxon>Eumycetozoa</taxon>
        <taxon>Dictyostelia</taxon>
        <taxon>Dictyosteliales</taxon>
        <taxon>Dictyosteliaceae</taxon>
        <taxon>Dictyostelium</taxon>
    </lineage>
</organism>
<dbReference type="EMBL" id="AAFI02000079">
    <property type="protein sequence ID" value="EAL64657.1"/>
    <property type="molecule type" value="Genomic_DNA"/>
</dbReference>
<dbReference type="RefSeq" id="XP_638189.1">
    <property type="nucleotide sequence ID" value="XM_633097.1"/>
</dbReference>
<dbReference type="SMR" id="Q54MV4"/>
<dbReference type="FunCoup" id="Q54MV4">
    <property type="interactions" value="3"/>
</dbReference>
<dbReference type="GlyGen" id="Q54MV4">
    <property type="glycosylation" value="6 sites"/>
</dbReference>
<dbReference type="PaxDb" id="44689-DDB0186632"/>
<dbReference type="EnsemblProtists" id="EAL64657">
    <property type="protein sequence ID" value="EAL64657"/>
    <property type="gene ID" value="DDB_G0285639"/>
</dbReference>
<dbReference type="GeneID" id="8625235"/>
<dbReference type="KEGG" id="ddi:DDB_G0285639"/>
<dbReference type="dictyBase" id="DDB_G0285639"/>
<dbReference type="VEuPathDB" id="AmoebaDB:DDB_G0285639"/>
<dbReference type="eggNOG" id="ENOG502SFRH">
    <property type="taxonomic scope" value="Eukaryota"/>
</dbReference>
<dbReference type="HOGENOM" id="CLU_097982_2_1_1"/>
<dbReference type="InParanoid" id="Q54MV4"/>
<dbReference type="PhylomeDB" id="Q54MV4"/>
<dbReference type="Reactome" id="R-DDI-6798695">
    <property type="pathway name" value="Neutrophil degranulation"/>
</dbReference>
<dbReference type="Reactome" id="R-DDI-8964038">
    <property type="pathway name" value="LDL clearance"/>
</dbReference>
<dbReference type="PRO" id="PR:Q54MV4"/>
<dbReference type="Proteomes" id="UP000002195">
    <property type="component" value="Chromosome 4"/>
</dbReference>
<dbReference type="GO" id="GO:0032934">
    <property type="term" value="F:sterol binding"/>
    <property type="evidence" value="ECO:0000318"/>
    <property type="project" value="GO_Central"/>
</dbReference>
<dbReference type="GO" id="GO:0015918">
    <property type="term" value="P:sterol transport"/>
    <property type="evidence" value="ECO:0000318"/>
    <property type="project" value="GO_Central"/>
</dbReference>
<dbReference type="Gene3D" id="2.60.40.770">
    <property type="match status" value="1"/>
</dbReference>
<dbReference type="InterPro" id="IPR014756">
    <property type="entry name" value="Ig_E-set"/>
</dbReference>
<dbReference type="InterPro" id="IPR003172">
    <property type="entry name" value="ML_dom"/>
</dbReference>
<dbReference type="InterPro" id="IPR039670">
    <property type="entry name" value="NPC2-like"/>
</dbReference>
<dbReference type="PANTHER" id="PTHR11306:SF60">
    <property type="entry name" value="COUNTIN-3-RELATED"/>
    <property type="match status" value="1"/>
</dbReference>
<dbReference type="PANTHER" id="PTHR11306">
    <property type="entry name" value="NIEMANN PICK TYPE C2 PROTEIN NPC2-RELATED"/>
    <property type="match status" value="1"/>
</dbReference>
<dbReference type="Pfam" id="PF02221">
    <property type="entry name" value="E1_DerP2_DerF2"/>
    <property type="match status" value="1"/>
</dbReference>
<dbReference type="SMART" id="SM00737">
    <property type="entry name" value="ML"/>
    <property type="match status" value="1"/>
</dbReference>
<dbReference type="SUPFAM" id="SSF81296">
    <property type="entry name" value="E set domains"/>
    <property type="match status" value="1"/>
</dbReference>
<feature type="signal peptide" evidence="2">
    <location>
        <begin position="1"/>
        <end position="21"/>
    </location>
</feature>
<feature type="chain" id="PRO_0000389015" description="Putative phosphatidylglycerol/phosphatidylinositol transfer protein DDB_G0285639">
    <location>
        <begin position="22"/>
        <end position="153"/>
    </location>
</feature>
<feature type="glycosylation site" description="N-linked (GlcNAc...) asparagine" evidence="2">
    <location>
        <position position="17"/>
    </location>
</feature>
<feature type="glycosylation site" description="N-linked (GlcNAc...) asparagine" evidence="2">
    <location>
        <position position="61"/>
    </location>
</feature>
<feature type="glycosylation site" description="N-linked (GlcNAc...) asparagine" evidence="2">
    <location>
        <position position="87"/>
    </location>
</feature>
<feature type="glycosylation site" description="N-linked (GlcNAc...) asparagine" evidence="2">
    <location>
        <position position="117"/>
    </location>
</feature>
<feature type="glycosylation site" description="N-linked (GlcNAc...) asparagine" evidence="2">
    <location>
        <position position="140"/>
    </location>
</feature>